<dbReference type="EC" id="1.18.6.1"/>
<dbReference type="EMBL" id="M32371">
    <property type="protein sequence ID" value="AAA22173.1"/>
    <property type="molecule type" value="Genomic_DNA"/>
</dbReference>
<dbReference type="PIR" id="D35405">
    <property type="entry name" value="D35405"/>
</dbReference>
<dbReference type="RefSeq" id="WP_012698949.1">
    <property type="nucleotide sequence ID" value="NZ_FPKM01000002.1"/>
</dbReference>
<dbReference type="PDB" id="5N6Y">
    <property type="method" value="X-ray"/>
    <property type="resolution" value="1.35 A"/>
    <property type="chains" value="C/F=1-113"/>
</dbReference>
<dbReference type="PDB" id="7ADR">
    <property type="method" value="X-ray"/>
    <property type="resolution" value="1.00 A"/>
    <property type="chains" value="C/F=1-113"/>
</dbReference>
<dbReference type="PDB" id="7ADY">
    <property type="method" value="X-ray"/>
    <property type="resolution" value="1.05 A"/>
    <property type="chains" value="C/F=1-113"/>
</dbReference>
<dbReference type="PDB" id="7AIZ">
    <property type="method" value="X-ray"/>
    <property type="resolution" value="1.05 A"/>
    <property type="chains" value="C/F=1-113"/>
</dbReference>
<dbReference type="PDBsum" id="5N6Y"/>
<dbReference type="PDBsum" id="7ADR"/>
<dbReference type="PDBsum" id="7ADY"/>
<dbReference type="PDBsum" id="7AIZ"/>
<dbReference type="SMR" id="P16857"/>
<dbReference type="DIP" id="DIP-48895N"/>
<dbReference type="IntAct" id="P16857">
    <property type="interactions" value="2"/>
</dbReference>
<dbReference type="GeneID" id="88183720"/>
<dbReference type="OMA" id="SWDREEN"/>
<dbReference type="GO" id="GO:0005524">
    <property type="term" value="F:ATP binding"/>
    <property type="evidence" value="ECO:0007669"/>
    <property type="project" value="UniProtKB-KW"/>
</dbReference>
<dbReference type="GO" id="GO:0051536">
    <property type="term" value="F:iron-sulfur cluster binding"/>
    <property type="evidence" value="ECO:0007669"/>
    <property type="project" value="UniProtKB-KW"/>
</dbReference>
<dbReference type="GO" id="GO:0046872">
    <property type="term" value="F:metal ion binding"/>
    <property type="evidence" value="ECO:0007669"/>
    <property type="project" value="UniProtKB-KW"/>
</dbReference>
<dbReference type="GO" id="GO:0016163">
    <property type="term" value="F:nitrogenase activity"/>
    <property type="evidence" value="ECO:0007669"/>
    <property type="project" value="UniProtKB-EC"/>
</dbReference>
<dbReference type="GO" id="GO:0009399">
    <property type="term" value="P:nitrogen fixation"/>
    <property type="evidence" value="ECO:0007669"/>
    <property type="project" value="UniProtKB-KW"/>
</dbReference>
<dbReference type="InterPro" id="IPR014279">
    <property type="entry name" value="Nase_V-Fe_dsu"/>
</dbReference>
<dbReference type="InterPro" id="IPR004349">
    <property type="entry name" value="V/Nase_d_su"/>
</dbReference>
<dbReference type="NCBIfam" id="TIGR02930">
    <property type="entry name" value="vnfG_nitrog"/>
    <property type="match status" value="1"/>
</dbReference>
<dbReference type="Pfam" id="PF03139">
    <property type="entry name" value="AnfG_VnfG"/>
    <property type="match status" value="1"/>
</dbReference>
<keyword id="KW-0002">3D-structure</keyword>
<keyword id="KW-0067">ATP-binding</keyword>
<keyword id="KW-0408">Iron</keyword>
<keyword id="KW-0411">Iron-sulfur</keyword>
<keyword id="KW-0479">Metal-binding</keyword>
<keyword id="KW-0535">Nitrogen fixation</keyword>
<keyword id="KW-0547">Nucleotide-binding</keyword>
<keyword id="KW-0560">Oxidoreductase</keyword>
<keyword id="KW-0837">Vanadium</keyword>
<name>VNFG_AZOVI</name>
<proteinExistence type="evidence at protein level"/>
<gene>
    <name type="primary">vnfG</name>
</gene>
<accession>P16857</accession>
<protein>
    <recommendedName>
        <fullName>Nitrogenase vanadium-iron protein delta chain</fullName>
        <ecNumber>1.18.6.1</ecNumber>
    </recommendedName>
    <alternativeName>
        <fullName>Dinitrogenase 2 subunit delta</fullName>
    </alternativeName>
    <alternativeName>
        <fullName>Nitrogenase component I</fullName>
    </alternativeName>
</protein>
<sequence>MSQSHLDDLFAYVEERCLWQFFSRTWDREENIEGVLNQVGRLLTGQEPLRGTPQERLFYADALAMANDVRERFPWASQVNKEEIEFLLDGLKSRLVDVTITRSTNRELNHHLY</sequence>
<reference key="1">
    <citation type="journal article" date="1990" name="J. Bacteriol.">
        <title>Nucleotide sequences and mutational analysis of the structural genes for nitrogenase 2 of Azotobacter vinelandii.</title>
        <authorList>
            <person name="Joerger R.D."/>
            <person name="Loveless T.M."/>
            <person name="Pau R.N."/>
            <person name="Mitchenall L.A."/>
            <person name="Simon B.H."/>
            <person name="Bishop P.E."/>
        </authorList>
    </citation>
    <scope>NUCLEOTIDE SEQUENCE [GENOMIC DNA]</scope>
</reference>
<evidence type="ECO:0007829" key="1">
    <source>
        <dbReference type="PDB" id="7ADR"/>
    </source>
</evidence>
<feature type="initiator methionine" description="Removed">
    <location>
        <position position="1"/>
    </location>
</feature>
<feature type="chain" id="PRO_0000213564" description="Nitrogenase vanadium-iron protein delta chain">
    <location>
        <begin position="2"/>
        <end position="113"/>
    </location>
</feature>
<feature type="helix" evidence="1">
    <location>
        <begin position="2"/>
        <end position="16"/>
    </location>
</feature>
<feature type="helix" evidence="1">
    <location>
        <begin position="19"/>
        <end position="21"/>
    </location>
</feature>
<feature type="helix" evidence="1">
    <location>
        <begin position="25"/>
        <end position="43"/>
    </location>
</feature>
<feature type="helix" evidence="1">
    <location>
        <begin position="53"/>
        <end position="72"/>
    </location>
</feature>
<feature type="helix" evidence="1">
    <location>
        <begin position="74"/>
        <end position="77"/>
    </location>
</feature>
<feature type="helix" evidence="1">
    <location>
        <begin position="81"/>
        <end position="99"/>
    </location>
</feature>
<feature type="turn" evidence="1">
    <location>
        <begin position="100"/>
        <end position="102"/>
    </location>
</feature>
<feature type="turn" evidence="1">
    <location>
        <begin position="106"/>
        <end position="109"/>
    </location>
</feature>
<organism>
    <name type="scientific">Azotobacter vinelandii</name>
    <dbReference type="NCBI Taxonomy" id="354"/>
    <lineage>
        <taxon>Bacteria</taxon>
        <taxon>Pseudomonadati</taxon>
        <taxon>Pseudomonadota</taxon>
        <taxon>Gammaproteobacteria</taxon>
        <taxon>Pseudomonadales</taxon>
        <taxon>Pseudomonadaceae</taxon>
        <taxon>Azotobacter</taxon>
    </lineage>
</organism>
<comment type="function">
    <text>The key enzymatic reactions in nitrogen fixation are catalyzed by the nitrogenase complex, which has 2 components: the iron protein (component 2) and a component 1 which is either a molybdenum-iron protein, a vanadium-iron, or an iron-iron protein.</text>
</comment>
<comment type="catalytic activity">
    <reaction>
        <text>N2 + 8 reduced [2Fe-2S]-[ferredoxin] + 16 ATP + 16 H2O = H2 + 8 oxidized [2Fe-2S]-[ferredoxin] + 2 NH4(+) + 16 ADP + 16 phosphate + 6 H(+)</text>
        <dbReference type="Rhea" id="RHEA:21448"/>
        <dbReference type="Rhea" id="RHEA-COMP:10000"/>
        <dbReference type="Rhea" id="RHEA-COMP:10001"/>
        <dbReference type="ChEBI" id="CHEBI:15377"/>
        <dbReference type="ChEBI" id="CHEBI:15378"/>
        <dbReference type="ChEBI" id="CHEBI:17997"/>
        <dbReference type="ChEBI" id="CHEBI:18276"/>
        <dbReference type="ChEBI" id="CHEBI:28938"/>
        <dbReference type="ChEBI" id="CHEBI:30616"/>
        <dbReference type="ChEBI" id="CHEBI:33737"/>
        <dbReference type="ChEBI" id="CHEBI:33738"/>
        <dbReference type="ChEBI" id="CHEBI:43474"/>
        <dbReference type="ChEBI" id="CHEBI:456216"/>
        <dbReference type="EC" id="1.18.6.1"/>
    </reaction>
</comment>
<comment type="cofactor">
    <cofactor>
        <name>iron-sulfur cluster</name>
        <dbReference type="ChEBI" id="CHEBI:30408"/>
    </cofactor>
</comment>
<comment type="cofactor">
    <cofactor>
        <name>vanadium cation</name>
        <dbReference type="ChEBI" id="CHEBI:35172"/>
    </cofactor>
</comment>
<comment type="subunit">
    <text>Hexamer of two alpha, two beta, and two delta chains.</text>
</comment>